<organism>
    <name type="scientific">Komagataella phaffii (strain GS115 / ATCC 20864)</name>
    <name type="common">Yeast</name>
    <name type="synonym">Pichia pastoris</name>
    <dbReference type="NCBI Taxonomy" id="644223"/>
    <lineage>
        <taxon>Eukaryota</taxon>
        <taxon>Fungi</taxon>
        <taxon>Dikarya</taxon>
        <taxon>Ascomycota</taxon>
        <taxon>Saccharomycotina</taxon>
        <taxon>Pichiomycetes</taxon>
        <taxon>Pichiales</taxon>
        <taxon>Pichiaceae</taxon>
        <taxon>Komagataella</taxon>
    </lineage>
</organism>
<sequence length="492" mass="56042">MLRKLVCGLEIHTQLKTGQKLFSLSSTEASKPNTNISFFDIGLPGSQPTLNQACLLTALKACVSLNSNINSVSTFDRKHYFYPDQPNGYQITQYYRPISSGGFLKLSKRFDEIDEDEKLVRIHHIQIEQDTGKSLYKDLSDKSLVDYNRSNMPLIEVVTEPDLNSVKQVKAFLRKYLQLMKTMDVSTGQLEAGAMRVDVNVSVDDGERVEIKNMTSTSAIVNAIRYEFKRQTKSIDKGNPIKTKETRGWDGNKTFRLRDKESSVDYRYMPDPELPPVVLDVNDIVTRIKKMTITTPEEQLAQLMSPPYNIKLRDARILLNDRNLLGYYYALFSRTSAKNIPSKYPINWCCHEFLGYLAKNNIDFSEDLFPVHQLADLIDCIFREQVTNNNAKILFEHLLANPAENEGPIIDLITKYELGEVDVTNDSELLAQVDSIIDDVLDTYPAIVKELQEGNKPGSINYLLGQCMRTSAGRIKSKVFESRLKEKIHIIK</sequence>
<feature type="chain" id="PRO_0000413272" description="Glutamyl-tRNA(Gln) amidotransferase subunit B, mitochondrial">
    <location>
        <begin position="1"/>
        <end position="492"/>
    </location>
</feature>
<keyword id="KW-0067">ATP-binding</keyword>
<keyword id="KW-0436">Ligase</keyword>
<keyword id="KW-0496">Mitochondrion</keyword>
<keyword id="KW-0547">Nucleotide-binding</keyword>
<keyword id="KW-0648">Protein biosynthesis</keyword>
<keyword id="KW-1185">Reference proteome</keyword>
<protein>
    <recommendedName>
        <fullName evidence="1">Glutamyl-tRNA(Gln) amidotransferase subunit B, mitochondrial</fullName>
        <shortName evidence="1">Glu-AdT subunit B</shortName>
        <ecNumber evidence="1">6.3.5.-</ecNumber>
    </recommendedName>
</protein>
<reference key="1">
    <citation type="journal article" date="2009" name="Nat. Biotechnol.">
        <title>Genome sequence of the recombinant protein production host Pichia pastoris.</title>
        <authorList>
            <person name="De Schutter K."/>
            <person name="Lin Y.-C."/>
            <person name="Tiels P."/>
            <person name="Van Hecke A."/>
            <person name="Glinka S."/>
            <person name="Weber-Lehmann J."/>
            <person name="Rouze P."/>
            <person name="Van de Peer Y."/>
            <person name="Callewaert N."/>
        </authorList>
    </citation>
    <scope>NUCLEOTIDE SEQUENCE [LARGE SCALE GENOMIC DNA]</scope>
    <source>
        <strain>GS115 / ATCC 20864</strain>
    </source>
</reference>
<dbReference type="EC" id="6.3.5.-" evidence="1"/>
<dbReference type="EMBL" id="FN392322">
    <property type="protein sequence ID" value="CAY71967.1"/>
    <property type="molecule type" value="Genomic_DNA"/>
</dbReference>
<dbReference type="RefSeq" id="XP_002494146.1">
    <property type="nucleotide sequence ID" value="XM_002494101.1"/>
</dbReference>
<dbReference type="SMR" id="C4R8P2"/>
<dbReference type="FunCoup" id="C4R8P2">
    <property type="interactions" value="372"/>
</dbReference>
<dbReference type="STRING" id="644223.C4R8P2"/>
<dbReference type="EnsemblFungi" id="CAY71967">
    <property type="protein sequence ID" value="CAY71967"/>
    <property type="gene ID" value="PAS_chr4_0705"/>
</dbReference>
<dbReference type="GeneID" id="8200601"/>
<dbReference type="KEGG" id="ppa:PAS_chr4_0705"/>
<dbReference type="eggNOG" id="KOG2438">
    <property type="taxonomic scope" value="Eukaryota"/>
</dbReference>
<dbReference type="HOGENOM" id="CLU_019240_4_0_1"/>
<dbReference type="InParanoid" id="C4R8P2"/>
<dbReference type="OMA" id="FELMFKE"/>
<dbReference type="OrthoDB" id="1722066at2759"/>
<dbReference type="Proteomes" id="UP000000314">
    <property type="component" value="Chromosome 4"/>
</dbReference>
<dbReference type="GO" id="GO:0030956">
    <property type="term" value="C:glutamyl-tRNA(Gln) amidotransferase complex"/>
    <property type="evidence" value="ECO:0007669"/>
    <property type="project" value="UniProtKB-UniRule"/>
</dbReference>
<dbReference type="GO" id="GO:0005739">
    <property type="term" value="C:mitochondrion"/>
    <property type="evidence" value="ECO:0007669"/>
    <property type="project" value="UniProtKB-SubCell"/>
</dbReference>
<dbReference type="GO" id="GO:0005524">
    <property type="term" value="F:ATP binding"/>
    <property type="evidence" value="ECO:0007669"/>
    <property type="project" value="UniProtKB-KW"/>
</dbReference>
<dbReference type="GO" id="GO:0050567">
    <property type="term" value="F:glutaminyl-tRNA synthase (glutamine-hydrolyzing) activity"/>
    <property type="evidence" value="ECO:0007669"/>
    <property type="project" value="UniProtKB-UniRule"/>
</dbReference>
<dbReference type="GO" id="GO:0070681">
    <property type="term" value="P:glutaminyl-tRNAGln biosynthesis via transamidation"/>
    <property type="evidence" value="ECO:0007669"/>
    <property type="project" value="UniProtKB-UniRule"/>
</dbReference>
<dbReference type="GO" id="GO:0032543">
    <property type="term" value="P:mitochondrial translation"/>
    <property type="evidence" value="ECO:0007669"/>
    <property type="project" value="UniProtKB-UniRule"/>
</dbReference>
<dbReference type="Gene3D" id="1.10.10.410">
    <property type="match status" value="1"/>
</dbReference>
<dbReference type="HAMAP" id="MF_00121">
    <property type="entry name" value="GatB"/>
    <property type="match status" value="1"/>
</dbReference>
<dbReference type="InterPro" id="IPR017959">
    <property type="entry name" value="Asn/Gln-tRNA_amidoTrfase_suB/E"/>
</dbReference>
<dbReference type="InterPro" id="IPR006075">
    <property type="entry name" value="Asn/Gln-tRNA_Trfase_suB/E_cat"/>
</dbReference>
<dbReference type="InterPro" id="IPR018027">
    <property type="entry name" value="Asn/Gln_amidotransferase"/>
</dbReference>
<dbReference type="InterPro" id="IPR003789">
    <property type="entry name" value="Asn/Gln_tRNA_amidoTrase-B-like"/>
</dbReference>
<dbReference type="InterPro" id="IPR004413">
    <property type="entry name" value="GatB"/>
</dbReference>
<dbReference type="InterPro" id="IPR023168">
    <property type="entry name" value="GatB_Yqey_C_2"/>
</dbReference>
<dbReference type="InterPro" id="IPR017958">
    <property type="entry name" value="Gln-tRNA_amidoTrfase_suB_CS"/>
</dbReference>
<dbReference type="InterPro" id="IPR014746">
    <property type="entry name" value="Gln_synth/guanido_kin_cat_dom"/>
</dbReference>
<dbReference type="NCBIfam" id="TIGR00133">
    <property type="entry name" value="gatB"/>
    <property type="match status" value="1"/>
</dbReference>
<dbReference type="NCBIfam" id="NF004012">
    <property type="entry name" value="PRK05477.1-2"/>
    <property type="match status" value="1"/>
</dbReference>
<dbReference type="PANTHER" id="PTHR11659">
    <property type="entry name" value="GLUTAMYL-TRNA GLN AMIDOTRANSFERASE SUBUNIT B MITOCHONDRIAL AND PROKARYOTIC PET112-RELATED"/>
    <property type="match status" value="1"/>
</dbReference>
<dbReference type="PANTHER" id="PTHR11659:SF0">
    <property type="entry name" value="GLUTAMYL-TRNA(GLN) AMIDOTRANSFERASE SUBUNIT B, MITOCHONDRIAL"/>
    <property type="match status" value="1"/>
</dbReference>
<dbReference type="Pfam" id="PF02934">
    <property type="entry name" value="GatB_N"/>
    <property type="match status" value="1"/>
</dbReference>
<dbReference type="Pfam" id="PF02637">
    <property type="entry name" value="GatB_Yqey"/>
    <property type="match status" value="1"/>
</dbReference>
<dbReference type="SMART" id="SM00845">
    <property type="entry name" value="GatB_Yqey"/>
    <property type="match status" value="1"/>
</dbReference>
<dbReference type="SUPFAM" id="SSF89095">
    <property type="entry name" value="GatB/YqeY motif"/>
    <property type="match status" value="1"/>
</dbReference>
<dbReference type="SUPFAM" id="SSF55931">
    <property type="entry name" value="Glutamine synthetase/guanido kinase"/>
    <property type="match status" value="1"/>
</dbReference>
<dbReference type="PROSITE" id="PS01234">
    <property type="entry name" value="GATB"/>
    <property type="match status" value="1"/>
</dbReference>
<comment type="function">
    <text evidence="1">Allows the formation of correctly charged Gln-tRNA(Gln) through the transamidation of misacylated Glu-tRNA(Gln) in the mitochondria. The reaction takes place in the presence of glutamine and ATP through an activated gamma-phospho-Glu-tRNA(Gln).</text>
</comment>
<comment type="catalytic activity">
    <reaction evidence="1">
        <text>L-glutamyl-tRNA(Gln) + L-glutamine + ATP + H2O = L-glutaminyl-tRNA(Gln) + L-glutamate + ADP + phosphate + H(+)</text>
        <dbReference type="Rhea" id="RHEA:17521"/>
        <dbReference type="Rhea" id="RHEA-COMP:9681"/>
        <dbReference type="Rhea" id="RHEA-COMP:9684"/>
        <dbReference type="ChEBI" id="CHEBI:15377"/>
        <dbReference type="ChEBI" id="CHEBI:15378"/>
        <dbReference type="ChEBI" id="CHEBI:29985"/>
        <dbReference type="ChEBI" id="CHEBI:30616"/>
        <dbReference type="ChEBI" id="CHEBI:43474"/>
        <dbReference type="ChEBI" id="CHEBI:58359"/>
        <dbReference type="ChEBI" id="CHEBI:78520"/>
        <dbReference type="ChEBI" id="CHEBI:78521"/>
        <dbReference type="ChEBI" id="CHEBI:456216"/>
    </reaction>
</comment>
<comment type="subunit">
    <text evidence="1">Subunit of the heterotrimeric GatFAB amidotransferase (AdT) complex, composed of A, B and F subunits.</text>
</comment>
<comment type="subcellular location">
    <subcellularLocation>
        <location evidence="1">Mitochondrion</location>
    </subcellularLocation>
</comment>
<comment type="miscellaneous">
    <text evidence="1">This protein may be expected to contain an N-terminal transit peptide but none has been predicted.</text>
</comment>
<comment type="similarity">
    <text evidence="1">Belongs to the GatB/GatE family. GatB subfamily.</text>
</comment>
<gene>
    <name evidence="1" type="primary">PET112</name>
    <name type="ordered locus">PAS_chr4_0705</name>
</gene>
<evidence type="ECO:0000255" key="1">
    <source>
        <dbReference type="HAMAP-Rule" id="MF_03147"/>
    </source>
</evidence>
<name>GATB_KOMPG</name>
<accession>C4R8P2</accession>
<proteinExistence type="inferred from homology"/>